<reference key="1">
    <citation type="journal article" date="2001" name="Mamm. Genome">
        <title>Comparative analysis of aryl-hydrocarbon receptor interacting protein-like 1 (Aipl1), a gene associated with inherited retinal disease in humans.</title>
        <authorList>
            <person name="Sohocki M.M."/>
            <person name="Sullivan L.S."/>
            <person name="Tirpak D.L."/>
            <person name="Daiger S.P."/>
        </authorList>
    </citation>
    <scope>NUCLEOTIDE SEQUENCE [MRNA]</scope>
</reference>
<organism>
    <name type="scientific">Macaca mulatta</name>
    <name type="common">Rhesus macaque</name>
    <dbReference type="NCBI Taxonomy" id="9544"/>
    <lineage>
        <taxon>Eukaryota</taxon>
        <taxon>Metazoa</taxon>
        <taxon>Chordata</taxon>
        <taxon>Craniata</taxon>
        <taxon>Vertebrata</taxon>
        <taxon>Euteleostomi</taxon>
        <taxon>Mammalia</taxon>
        <taxon>Eutheria</taxon>
        <taxon>Euarchontoglires</taxon>
        <taxon>Primates</taxon>
        <taxon>Haplorrhini</taxon>
        <taxon>Catarrhini</taxon>
        <taxon>Cercopithecidae</taxon>
        <taxon>Cercopithecinae</taxon>
        <taxon>Macaca</taxon>
    </lineage>
</organism>
<keyword id="KW-0963">Cytoplasm</keyword>
<keyword id="KW-0539">Nucleus</keyword>
<keyword id="KW-1185">Reference proteome</keyword>
<keyword id="KW-0677">Repeat</keyword>
<keyword id="KW-0802">TPR repeat</keyword>
<dbReference type="EMBL" id="AF296411">
    <property type="protein sequence ID" value="AAK77955.1"/>
    <property type="molecule type" value="mRNA"/>
</dbReference>
<dbReference type="SMR" id="Q95MP0"/>
<dbReference type="FunCoup" id="Q95MP0">
    <property type="interactions" value="1301"/>
</dbReference>
<dbReference type="STRING" id="9544.ENSMMUP00000059777"/>
<dbReference type="PaxDb" id="9544-ENSMMUP00000023357"/>
<dbReference type="eggNOG" id="KOG0545">
    <property type="taxonomic scope" value="Eukaryota"/>
</dbReference>
<dbReference type="HOGENOM" id="CLU_052244_0_0_1"/>
<dbReference type="InParanoid" id="Q95MP0"/>
<dbReference type="Proteomes" id="UP000006718">
    <property type="component" value="Unassembled WGS sequence"/>
</dbReference>
<dbReference type="GO" id="GO:0005737">
    <property type="term" value="C:cytoplasm"/>
    <property type="evidence" value="ECO:0007669"/>
    <property type="project" value="UniProtKB-SubCell"/>
</dbReference>
<dbReference type="GO" id="GO:0005634">
    <property type="term" value="C:nucleus"/>
    <property type="evidence" value="ECO:0007669"/>
    <property type="project" value="UniProtKB-SubCell"/>
</dbReference>
<dbReference type="GO" id="GO:0003755">
    <property type="term" value="F:peptidyl-prolyl cis-trans isomerase activity"/>
    <property type="evidence" value="ECO:0007669"/>
    <property type="project" value="InterPro"/>
</dbReference>
<dbReference type="FunFam" id="1.25.40.10:FF:000052">
    <property type="entry name" value="Aryl-hydrocarbon-interacting protein-like 1"/>
    <property type="match status" value="1"/>
</dbReference>
<dbReference type="FunFam" id="3.10.50.40:FF:000018">
    <property type="entry name" value="Aryl-hydrocarbon-interacting protein-like 1"/>
    <property type="match status" value="1"/>
</dbReference>
<dbReference type="Gene3D" id="3.10.50.40">
    <property type="match status" value="1"/>
</dbReference>
<dbReference type="Gene3D" id="1.25.40.10">
    <property type="entry name" value="Tetratricopeptide repeat domain"/>
    <property type="match status" value="1"/>
</dbReference>
<dbReference type="InterPro" id="IPR039663">
    <property type="entry name" value="AIP/AIPL1/TTC9"/>
</dbReference>
<dbReference type="InterPro" id="IPR056277">
    <property type="entry name" value="PPIase_AIP"/>
</dbReference>
<dbReference type="InterPro" id="IPR046357">
    <property type="entry name" value="PPIase_dom_sf"/>
</dbReference>
<dbReference type="InterPro" id="IPR011990">
    <property type="entry name" value="TPR-like_helical_dom_sf"/>
</dbReference>
<dbReference type="InterPro" id="IPR019734">
    <property type="entry name" value="TPR_rpt"/>
</dbReference>
<dbReference type="PANTHER" id="PTHR11242">
    <property type="entry name" value="ARYL HYDROCARBON RECEPTOR INTERACTING PROTEIN RELATED"/>
    <property type="match status" value="1"/>
</dbReference>
<dbReference type="PANTHER" id="PTHR11242:SF2">
    <property type="entry name" value="ARYL-HYDROCARBON-INTERACTING PROTEIN-LIKE 1"/>
    <property type="match status" value="1"/>
</dbReference>
<dbReference type="Pfam" id="PF23322">
    <property type="entry name" value="PPIase_AIP"/>
    <property type="match status" value="1"/>
</dbReference>
<dbReference type="SMART" id="SM00028">
    <property type="entry name" value="TPR"/>
    <property type="match status" value="2"/>
</dbReference>
<dbReference type="SUPFAM" id="SSF54534">
    <property type="entry name" value="FKBP-like"/>
    <property type="match status" value="1"/>
</dbReference>
<dbReference type="SUPFAM" id="SSF48452">
    <property type="entry name" value="TPR-like"/>
    <property type="match status" value="1"/>
</dbReference>
<dbReference type="PROSITE" id="PS50293">
    <property type="entry name" value="TPR_REGION"/>
    <property type="match status" value="2"/>
</dbReference>
<sequence length="392" mass="44730">MDAALLLNVEGVKKTILHGGTGELPNFITGSRVIFHFRTMKCDEERTVIDDSRQVDQPMHIIIGNMFKLEVWEILLTSMRVHEVAEFWCDTIHTGVYPILSRSLRQMAQGKDPTEWHVHTCGLANMFAYHTLGYEDLDELQKEPQPLIFVIELLQVDAPSDYQRETWNLSNHEKMKVVPVLHGEGNRLFKLGRYEEASSKYQEAIICLRNLQTKEKPWEVQWLKLEKMINTLTLNYCQCLLKKEEYYEVLEHTSDILRHHPGIVKAYYVRARAHAEVWNEAEAKADLQKVLELEPSMQKAVRRELRLLENRMAEKQEEERLRCRNMLSQGATQPPAEPPAQPPTAPPAELSTGPPADPPAEPPTAPPAELSTGPPAEPPAELPLSPGHSLQH</sequence>
<feature type="chain" id="PRO_0000075343" description="Aryl-hydrocarbon-interacting protein-like 1">
    <location>
        <begin position="1"/>
        <end position="392"/>
    </location>
</feature>
<feature type="domain" description="PPIase FKBP-type">
    <location>
        <begin position="53"/>
        <end position="145"/>
    </location>
</feature>
<feature type="repeat" description="TPR 1">
    <location>
        <begin position="178"/>
        <end position="211"/>
    </location>
</feature>
<feature type="repeat" description="TPR 2">
    <location>
        <begin position="230"/>
        <end position="263"/>
    </location>
</feature>
<feature type="repeat" description="TPR 3">
    <location>
        <begin position="264"/>
        <end position="297"/>
    </location>
</feature>
<feature type="region of interest" description="Disordered" evidence="2">
    <location>
        <begin position="329"/>
        <end position="392"/>
    </location>
</feature>
<feature type="compositionally biased region" description="Pro residues" evidence="2">
    <location>
        <begin position="335"/>
        <end position="346"/>
    </location>
</feature>
<feature type="compositionally biased region" description="Pro residues" evidence="2">
    <location>
        <begin position="355"/>
        <end position="366"/>
    </location>
</feature>
<proteinExistence type="evidence at transcript level"/>
<comment type="function">
    <text evidence="1">May be important in protein trafficking and/or protein folding and stabilization.</text>
</comment>
<comment type="subunit">
    <text evidence="1">Interacts with NUB1.</text>
</comment>
<comment type="subcellular location">
    <subcellularLocation>
        <location evidence="1">Cytoplasm</location>
    </subcellularLocation>
    <subcellularLocation>
        <location evidence="1">Nucleus</location>
    </subcellularLocation>
</comment>
<gene>
    <name type="primary">AIPL1</name>
</gene>
<accession>Q95MP0</accession>
<evidence type="ECO:0000250" key="1"/>
<evidence type="ECO:0000256" key="2">
    <source>
        <dbReference type="SAM" id="MobiDB-lite"/>
    </source>
</evidence>
<protein>
    <recommendedName>
        <fullName>Aryl-hydrocarbon-interacting protein-like 1</fullName>
    </recommendedName>
</protein>
<name>AIPL1_MACMU</name>